<feature type="chain" id="PRO_1000164843" description="Bifunctional protein PyrR">
    <location>
        <begin position="1"/>
        <end position="180"/>
    </location>
</feature>
<feature type="short sequence motif" description="PRPP-binding" evidence="1">
    <location>
        <begin position="101"/>
        <end position="113"/>
    </location>
</feature>
<sequence length="180" mass="20409">MQEKAVVLDDQMIRRALTRISHEIVERNKGVDNCVLVGIKTRGIFIAQRLAERIGQIEGKEMEVGELDITLYRDDLTLQSKNKEPLVKGSDIPVDITKKKVILVDDVLYTGRTVRAAMDALMDLGRPSQIQLAVLVDRGHRELPIRADYVGKNIPTSSEERIEVDLQETDQQDRVSIYDK</sequence>
<reference key="1">
    <citation type="submission" date="2009-02" db="EMBL/GenBank/DDBJ databases">
        <title>Genome sequence of Bacillus cereus 03BB102.</title>
        <authorList>
            <person name="Dodson R.J."/>
            <person name="Jackson P."/>
            <person name="Munk A.C."/>
            <person name="Brettin T."/>
            <person name="Bruce D."/>
            <person name="Detter C."/>
            <person name="Tapia R."/>
            <person name="Han C."/>
            <person name="Sutton G."/>
            <person name="Sims D."/>
        </authorList>
    </citation>
    <scope>NUCLEOTIDE SEQUENCE [LARGE SCALE GENOMIC DNA]</scope>
    <source>
        <strain>03BB102</strain>
    </source>
</reference>
<comment type="function">
    <text evidence="1">Regulates transcriptional attenuation of the pyrimidine nucleotide (pyr) operon by binding in a uridine-dependent manner to specific sites on pyr mRNA. This disrupts an antiterminator hairpin in the RNA and favors formation of a downstream transcription terminator, leading to a reduced expression of downstream genes.</text>
</comment>
<comment type="function">
    <text evidence="1">Also displays a weak uracil phosphoribosyltransferase activity which is not physiologically significant.</text>
</comment>
<comment type="catalytic activity">
    <reaction evidence="1">
        <text>UMP + diphosphate = 5-phospho-alpha-D-ribose 1-diphosphate + uracil</text>
        <dbReference type="Rhea" id="RHEA:13017"/>
        <dbReference type="ChEBI" id="CHEBI:17568"/>
        <dbReference type="ChEBI" id="CHEBI:33019"/>
        <dbReference type="ChEBI" id="CHEBI:57865"/>
        <dbReference type="ChEBI" id="CHEBI:58017"/>
        <dbReference type="EC" id="2.4.2.9"/>
    </reaction>
</comment>
<comment type="subunit">
    <text evidence="1">Homodimer and homohexamer; in equilibrium.</text>
</comment>
<comment type="similarity">
    <text evidence="1">Belongs to the purine/pyrimidine phosphoribosyltransferase family. PyrR subfamily.</text>
</comment>
<organism>
    <name type="scientific">Bacillus cereus (strain 03BB102)</name>
    <dbReference type="NCBI Taxonomy" id="572264"/>
    <lineage>
        <taxon>Bacteria</taxon>
        <taxon>Bacillati</taxon>
        <taxon>Bacillota</taxon>
        <taxon>Bacilli</taxon>
        <taxon>Bacillales</taxon>
        <taxon>Bacillaceae</taxon>
        <taxon>Bacillus</taxon>
        <taxon>Bacillus cereus group</taxon>
    </lineage>
</organism>
<keyword id="KW-0328">Glycosyltransferase</keyword>
<keyword id="KW-0694">RNA-binding</keyword>
<keyword id="KW-0804">Transcription</keyword>
<keyword id="KW-0805">Transcription regulation</keyword>
<keyword id="KW-0806">Transcription termination</keyword>
<keyword id="KW-0808">Transferase</keyword>
<evidence type="ECO:0000255" key="1">
    <source>
        <dbReference type="HAMAP-Rule" id="MF_01219"/>
    </source>
</evidence>
<protein>
    <recommendedName>
        <fullName evidence="1">Bifunctional protein PyrR</fullName>
    </recommendedName>
    <domain>
        <recommendedName>
            <fullName evidence="1">Pyrimidine operon regulatory protein</fullName>
        </recommendedName>
    </domain>
    <domain>
        <recommendedName>
            <fullName evidence="1">Uracil phosphoribosyltransferase</fullName>
            <shortName evidence="1">UPRTase</shortName>
            <ecNumber evidence="1">2.4.2.9</ecNumber>
        </recommendedName>
    </domain>
</protein>
<accession>C1EPQ5</accession>
<name>PYRR_BACC3</name>
<gene>
    <name evidence="1" type="primary">pyrR</name>
    <name type="ordered locus">BCA_3994</name>
</gene>
<proteinExistence type="inferred from homology"/>
<dbReference type="EC" id="2.4.2.9" evidence="1"/>
<dbReference type="EMBL" id="CP001407">
    <property type="protein sequence ID" value="ACO26796.1"/>
    <property type="molecule type" value="Genomic_DNA"/>
</dbReference>
<dbReference type="RefSeq" id="WP_001156491.1">
    <property type="nucleotide sequence ID" value="NZ_CP009318.1"/>
</dbReference>
<dbReference type="SMR" id="C1EPQ5"/>
<dbReference type="GeneID" id="75087028"/>
<dbReference type="KEGG" id="bcx:BCA_3994"/>
<dbReference type="PATRIC" id="fig|572264.18.peg.3948"/>
<dbReference type="Proteomes" id="UP000002210">
    <property type="component" value="Chromosome"/>
</dbReference>
<dbReference type="GO" id="GO:0003723">
    <property type="term" value="F:RNA binding"/>
    <property type="evidence" value="ECO:0007669"/>
    <property type="project" value="UniProtKB-UniRule"/>
</dbReference>
<dbReference type="GO" id="GO:0004845">
    <property type="term" value="F:uracil phosphoribosyltransferase activity"/>
    <property type="evidence" value="ECO:0007669"/>
    <property type="project" value="UniProtKB-UniRule"/>
</dbReference>
<dbReference type="GO" id="GO:0006353">
    <property type="term" value="P:DNA-templated transcription termination"/>
    <property type="evidence" value="ECO:0007669"/>
    <property type="project" value="UniProtKB-UniRule"/>
</dbReference>
<dbReference type="CDD" id="cd06223">
    <property type="entry name" value="PRTases_typeI"/>
    <property type="match status" value="1"/>
</dbReference>
<dbReference type="FunFam" id="3.40.50.2020:FF:000020">
    <property type="entry name" value="Bifunctional protein PyrR"/>
    <property type="match status" value="1"/>
</dbReference>
<dbReference type="Gene3D" id="3.40.50.2020">
    <property type="match status" value="1"/>
</dbReference>
<dbReference type="HAMAP" id="MF_01219">
    <property type="entry name" value="PyrR"/>
    <property type="match status" value="1"/>
</dbReference>
<dbReference type="InterPro" id="IPR000836">
    <property type="entry name" value="PRibTrfase_dom"/>
</dbReference>
<dbReference type="InterPro" id="IPR029057">
    <property type="entry name" value="PRTase-like"/>
</dbReference>
<dbReference type="InterPro" id="IPR023050">
    <property type="entry name" value="PyrR"/>
</dbReference>
<dbReference type="InterPro" id="IPR050137">
    <property type="entry name" value="PyrR_bifunctional"/>
</dbReference>
<dbReference type="NCBIfam" id="NF003545">
    <property type="entry name" value="PRK05205.1-1"/>
    <property type="match status" value="1"/>
</dbReference>
<dbReference type="NCBIfam" id="NF003547">
    <property type="entry name" value="PRK05205.1-3"/>
    <property type="match status" value="1"/>
</dbReference>
<dbReference type="NCBIfam" id="NF003548">
    <property type="entry name" value="PRK05205.1-4"/>
    <property type="match status" value="1"/>
</dbReference>
<dbReference type="NCBIfam" id="NF003549">
    <property type="entry name" value="PRK05205.1-5"/>
    <property type="match status" value="1"/>
</dbReference>
<dbReference type="PANTHER" id="PTHR11608">
    <property type="entry name" value="BIFUNCTIONAL PROTEIN PYRR"/>
    <property type="match status" value="1"/>
</dbReference>
<dbReference type="PANTHER" id="PTHR11608:SF0">
    <property type="entry name" value="BIFUNCTIONAL PROTEIN PYRR"/>
    <property type="match status" value="1"/>
</dbReference>
<dbReference type="Pfam" id="PF00156">
    <property type="entry name" value="Pribosyltran"/>
    <property type="match status" value="1"/>
</dbReference>
<dbReference type="SUPFAM" id="SSF53271">
    <property type="entry name" value="PRTase-like"/>
    <property type="match status" value="1"/>
</dbReference>